<protein>
    <recommendedName>
        <fullName>Probable transglycosylase IsaA</fullName>
        <ecNumber>3.2.-.-</ecNumber>
    </recommendedName>
    <alternativeName>
        <fullName>Immunodominant staphylococcal antigen A</fullName>
    </alternativeName>
</protein>
<accession>Q2YWD9</accession>
<keyword id="KW-0326">Glycosidase</keyword>
<keyword id="KW-0378">Hydrolase</keyword>
<keyword id="KW-0964">Secreted</keyword>
<keyword id="KW-0732">Signal</keyword>
<dbReference type="EC" id="3.2.-.-"/>
<dbReference type="EMBL" id="AJ938182">
    <property type="protein sequence ID" value="CAI82131.1"/>
    <property type="molecule type" value="Genomic_DNA"/>
</dbReference>
<dbReference type="RefSeq" id="WP_000751271.1">
    <property type="nucleotide sequence ID" value="NC_007622.1"/>
</dbReference>
<dbReference type="SMR" id="Q2YWD9"/>
<dbReference type="KEGG" id="sab:SAB2443c"/>
<dbReference type="HOGENOM" id="CLU_099865_0_0_9"/>
<dbReference type="GO" id="GO:0005576">
    <property type="term" value="C:extracellular region"/>
    <property type="evidence" value="ECO:0007669"/>
    <property type="project" value="UniProtKB-SubCell"/>
</dbReference>
<dbReference type="GO" id="GO:0016798">
    <property type="term" value="F:hydrolase activity, acting on glycosyl bonds"/>
    <property type="evidence" value="ECO:0007669"/>
    <property type="project" value="UniProtKB-KW"/>
</dbReference>
<dbReference type="Gene3D" id="1.10.530.10">
    <property type="match status" value="1"/>
</dbReference>
<dbReference type="InterPro" id="IPR023346">
    <property type="entry name" value="Lysozyme-like_dom_sf"/>
</dbReference>
<dbReference type="InterPro" id="IPR008258">
    <property type="entry name" value="Transglycosylase_SLT_dom_1"/>
</dbReference>
<dbReference type="Pfam" id="PF01464">
    <property type="entry name" value="SLT"/>
    <property type="match status" value="1"/>
</dbReference>
<dbReference type="SUPFAM" id="SSF53955">
    <property type="entry name" value="Lysozyme-like"/>
    <property type="match status" value="1"/>
</dbReference>
<comment type="function">
    <text evidence="1">Is able to cleave peptidoglycan.</text>
</comment>
<comment type="subcellular location">
    <subcellularLocation>
        <location evidence="1">Secreted</location>
    </subcellularLocation>
</comment>
<comment type="similarity">
    <text evidence="2">Belongs to the transglycosylase family. IsaA subfamily.</text>
</comment>
<name>ISAA_STAAB</name>
<proteinExistence type="inferred from homology"/>
<evidence type="ECO:0000250" key="1"/>
<evidence type="ECO:0000305" key="2"/>
<feature type="signal peptide" evidence="1">
    <location>
        <begin position="1"/>
        <end position="29"/>
    </location>
</feature>
<feature type="chain" id="PRO_0000272656" description="Probable transglycosylase IsaA">
    <location>
        <begin position="30"/>
        <end position="233"/>
    </location>
</feature>
<sequence length="233" mass="24296">MKKTIMASSLAVALGVTGYAASTGHEAHAAEMNVDQAHLVDLAHNHQDQLNAAPIKDGAYDIHFVKDGFQYNFTSNGTTWSWSYEAANGQTAGFSNVAGADYTTSYNQGSNVQSVSYNAQSSNSNVEAVSAPTYHNYSTSTTSSSVRLSNGNTAGATGSSAAQIMAQRTGVSASTWAAIIARESNGQVNAYNPSGASGLFQTMPGWGPTNTVDQQINAAVKAYKAQGLSAWGF</sequence>
<gene>
    <name type="primary">isaA</name>
    <name type="ordered locus">SAB2443c</name>
</gene>
<organism>
    <name type="scientific">Staphylococcus aureus (strain bovine RF122 / ET3-1)</name>
    <dbReference type="NCBI Taxonomy" id="273036"/>
    <lineage>
        <taxon>Bacteria</taxon>
        <taxon>Bacillati</taxon>
        <taxon>Bacillota</taxon>
        <taxon>Bacilli</taxon>
        <taxon>Bacillales</taxon>
        <taxon>Staphylococcaceae</taxon>
        <taxon>Staphylococcus</taxon>
    </lineage>
</organism>
<reference key="1">
    <citation type="journal article" date="2007" name="PLoS ONE">
        <title>Molecular correlates of host specialization in Staphylococcus aureus.</title>
        <authorList>
            <person name="Herron-Olson L."/>
            <person name="Fitzgerald J.R."/>
            <person name="Musser J.M."/>
            <person name="Kapur V."/>
        </authorList>
    </citation>
    <scope>NUCLEOTIDE SEQUENCE [LARGE SCALE GENOMIC DNA]</scope>
    <source>
        <strain>bovine RF122 / ET3-1</strain>
    </source>
</reference>